<comment type="function">
    <text evidence="1">Catalyzes the conversion of dethiobiotin (DTB) to biotin by the insertion of a sulfur atom into dethiobiotin via a radical-based mechanism.</text>
</comment>
<comment type="catalytic activity">
    <reaction evidence="1">
        <text>(4R,5S)-dethiobiotin + (sulfur carrier)-SH + 2 reduced [2Fe-2S]-[ferredoxin] + 2 S-adenosyl-L-methionine = (sulfur carrier)-H + biotin + 2 5'-deoxyadenosine + 2 L-methionine + 2 oxidized [2Fe-2S]-[ferredoxin]</text>
        <dbReference type="Rhea" id="RHEA:22060"/>
        <dbReference type="Rhea" id="RHEA-COMP:10000"/>
        <dbReference type="Rhea" id="RHEA-COMP:10001"/>
        <dbReference type="Rhea" id="RHEA-COMP:14737"/>
        <dbReference type="Rhea" id="RHEA-COMP:14739"/>
        <dbReference type="ChEBI" id="CHEBI:17319"/>
        <dbReference type="ChEBI" id="CHEBI:29917"/>
        <dbReference type="ChEBI" id="CHEBI:33737"/>
        <dbReference type="ChEBI" id="CHEBI:33738"/>
        <dbReference type="ChEBI" id="CHEBI:57586"/>
        <dbReference type="ChEBI" id="CHEBI:57844"/>
        <dbReference type="ChEBI" id="CHEBI:59789"/>
        <dbReference type="ChEBI" id="CHEBI:64428"/>
        <dbReference type="ChEBI" id="CHEBI:149473"/>
        <dbReference type="EC" id="2.8.1.6"/>
    </reaction>
</comment>
<comment type="cofactor">
    <cofactor evidence="1">
        <name>[4Fe-4S] cluster</name>
        <dbReference type="ChEBI" id="CHEBI:49883"/>
    </cofactor>
    <text evidence="1">Binds 1 [4Fe-4S] cluster. The cluster is coordinated with 3 cysteines and an exchangeable S-adenosyl-L-methionine.</text>
</comment>
<comment type="cofactor">
    <cofactor evidence="1">
        <name>[2Fe-2S] cluster</name>
        <dbReference type="ChEBI" id="CHEBI:190135"/>
    </cofactor>
    <text evidence="1">Binds 1 [2Fe-2S] cluster. The cluster is coordinated with 3 cysteines and 1 arginine.</text>
</comment>
<comment type="pathway">
    <text evidence="1">Cofactor biosynthesis; biotin biosynthesis; biotin from 7,8-diaminononanoate: step 2/2.</text>
</comment>
<comment type="subunit">
    <text evidence="1">Homodimer.</text>
</comment>
<comment type="similarity">
    <text evidence="1">Belongs to the radical SAM superfamily. Biotin synthase family.</text>
</comment>
<organism>
    <name type="scientific">Xylella fastidiosa (strain M23)</name>
    <dbReference type="NCBI Taxonomy" id="405441"/>
    <lineage>
        <taxon>Bacteria</taxon>
        <taxon>Pseudomonadati</taxon>
        <taxon>Pseudomonadota</taxon>
        <taxon>Gammaproteobacteria</taxon>
        <taxon>Lysobacterales</taxon>
        <taxon>Lysobacteraceae</taxon>
        <taxon>Xylella</taxon>
    </lineage>
</organism>
<evidence type="ECO:0000255" key="1">
    <source>
        <dbReference type="HAMAP-Rule" id="MF_01694"/>
    </source>
</evidence>
<evidence type="ECO:0000255" key="2">
    <source>
        <dbReference type="PROSITE-ProRule" id="PRU01266"/>
    </source>
</evidence>
<protein>
    <recommendedName>
        <fullName evidence="1">Biotin synthase</fullName>
        <ecNumber evidence="1">2.8.1.6</ecNumber>
    </recommendedName>
</protein>
<feature type="chain" id="PRO_0000381715" description="Biotin synthase">
    <location>
        <begin position="1"/>
        <end position="341"/>
    </location>
</feature>
<feature type="domain" description="Radical SAM core" evidence="2">
    <location>
        <begin position="40"/>
        <end position="267"/>
    </location>
</feature>
<feature type="binding site" evidence="1">
    <location>
        <position position="55"/>
    </location>
    <ligand>
        <name>[4Fe-4S] cluster</name>
        <dbReference type="ChEBI" id="CHEBI:49883"/>
        <note>4Fe-4S-S-AdoMet</note>
    </ligand>
</feature>
<feature type="binding site" evidence="1">
    <location>
        <position position="59"/>
    </location>
    <ligand>
        <name>[4Fe-4S] cluster</name>
        <dbReference type="ChEBI" id="CHEBI:49883"/>
        <note>4Fe-4S-S-AdoMet</note>
    </ligand>
</feature>
<feature type="binding site" evidence="1">
    <location>
        <position position="62"/>
    </location>
    <ligand>
        <name>[4Fe-4S] cluster</name>
        <dbReference type="ChEBI" id="CHEBI:49883"/>
        <note>4Fe-4S-S-AdoMet</note>
    </ligand>
</feature>
<feature type="binding site" evidence="1">
    <location>
        <position position="99"/>
    </location>
    <ligand>
        <name>[2Fe-2S] cluster</name>
        <dbReference type="ChEBI" id="CHEBI:190135"/>
    </ligand>
</feature>
<feature type="binding site" evidence="1">
    <location>
        <position position="130"/>
    </location>
    <ligand>
        <name>[2Fe-2S] cluster</name>
        <dbReference type="ChEBI" id="CHEBI:190135"/>
    </ligand>
</feature>
<feature type="binding site" evidence="1">
    <location>
        <position position="190"/>
    </location>
    <ligand>
        <name>[2Fe-2S] cluster</name>
        <dbReference type="ChEBI" id="CHEBI:190135"/>
    </ligand>
</feature>
<feature type="binding site" evidence="1">
    <location>
        <position position="262"/>
    </location>
    <ligand>
        <name>[2Fe-2S] cluster</name>
        <dbReference type="ChEBI" id="CHEBI:190135"/>
    </ligand>
</feature>
<keyword id="KW-0001">2Fe-2S</keyword>
<keyword id="KW-0004">4Fe-4S</keyword>
<keyword id="KW-0093">Biotin biosynthesis</keyword>
<keyword id="KW-0408">Iron</keyword>
<keyword id="KW-0411">Iron-sulfur</keyword>
<keyword id="KW-0479">Metal-binding</keyword>
<keyword id="KW-0949">S-adenosyl-L-methionine</keyword>
<keyword id="KW-0808">Transferase</keyword>
<sequence length="341" mass="37690">MSSIIRYDWTAEELHALFDLSLPELLYRAASVHRQHFDPAEIQVSTLLSVKTGGCPEDCSYCPQAQRYDTGVTAQKLMDVDAVVAKARQAKLAGASRFCMGAAWRSPKDRDIPKIASMIREVKALGLETCATLGMLNTCQAQALKDAGLDYYNHNVDTSPDFYDSVIHTRQYQDRLDTLAHVRDVGLKTCCGGIVGMGETRQHRVGLLLTLATLPAHPDSVPVNLLVQVAGTPLHGTQTLDPFEFVRMIAVARITMPRSMVRLSAGRESMSDELQLLCFMAGANSIFYGEKLLTTANPETERDQALFQRLGLRPMHLMENVSNKDQHHGNVHADIACKHVV</sequence>
<name>BIOB_XYLF2</name>
<accession>B2I672</accession>
<gene>
    <name evidence="1" type="primary">bioB</name>
    <name type="ordered locus">XfasM23_0041</name>
</gene>
<reference key="1">
    <citation type="journal article" date="2010" name="J. Bacteriol.">
        <title>Whole genome sequences of two Xylella fastidiosa strains (M12 and M23) causing almond leaf scorch disease in California.</title>
        <authorList>
            <person name="Chen J."/>
            <person name="Xie G."/>
            <person name="Han S."/>
            <person name="Chertkov O."/>
            <person name="Sims D."/>
            <person name="Civerolo E.L."/>
        </authorList>
    </citation>
    <scope>NUCLEOTIDE SEQUENCE [LARGE SCALE GENOMIC DNA]</scope>
    <source>
        <strain>M23</strain>
    </source>
</reference>
<dbReference type="EC" id="2.8.1.6" evidence="1"/>
<dbReference type="EMBL" id="CP001011">
    <property type="protein sequence ID" value="ACB91499.1"/>
    <property type="molecule type" value="Genomic_DNA"/>
</dbReference>
<dbReference type="RefSeq" id="WP_004087148.1">
    <property type="nucleotide sequence ID" value="NC_010577.1"/>
</dbReference>
<dbReference type="SMR" id="B2I672"/>
<dbReference type="GeneID" id="93903734"/>
<dbReference type="KEGG" id="xfn:XfasM23_0041"/>
<dbReference type="HOGENOM" id="CLU_033172_1_2_6"/>
<dbReference type="UniPathway" id="UPA00078">
    <property type="reaction ID" value="UER00162"/>
</dbReference>
<dbReference type="Proteomes" id="UP000001698">
    <property type="component" value="Chromosome"/>
</dbReference>
<dbReference type="GO" id="GO:0051537">
    <property type="term" value="F:2 iron, 2 sulfur cluster binding"/>
    <property type="evidence" value="ECO:0007669"/>
    <property type="project" value="UniProtKB-KW"/>
</dbReference>
<dbReference type="GO" id="GO:0051539">
    <property type="term" value="F:4 iron, 4 sulfur cluster binding"/>
    <property type="evidence" value="ECO:0007669"/>
    <property type="project" value="UniProtKB-KW"/>
</dbReference>
<dbReference type="GO" id="GO:0004076">
    <property type="term" value="F:biotin synthase activity"/>
    <property type="evidence" value="ECO:0007669"/>
    <property type="project" value="UniProtKB-UniRule"/>
</dbReference>
<dbReference type="GO" id="GO:0005506">
    <property type="term" value="F:iron ion binding"/>
    <property type="evidence" value="ECO:0007669"/>
    <property type="project" value="UniProtKB-UniRule"/>
</dbReference>
<dbReference type="GO" id="GO:0009102">
    <property type="term" value="P:biotin biosynthetic process"/>
    <property type="evidence" value="ECO:0007669"/>
    <property type="project" value="UniProtKB-UniRule"/>
</dbReference>
<dbReference type="CDD" id="cd01335">
    <property type="entry name" value="Radical_SAM"/>
    <property type="match status" value="1"/>
</dbReference>
<dbReference type="FunFam" id="3.20.20.70:FF:000011">
    <property type="entry name" value="Biotin synthase"/>
    <property type="match status" value="1"/>
</dbReference>
<dbReference type="Gene3D" id="3.20.20.70">
    <property type="entry name" value="Aldolase class I"/>
    <property type="match status" value="1"/>
</dbReference>
<dbReference type="HAMAP" id="MF_01694">
    <property type="entry name" value="BioB"/>
    <property type="match status" value="1"/>
</dbReference>
<dbReference type="InterPro" id="IPR013785">
    <property type="entry name" value="Aldolase_TIM"/>
</dbReference>
<dbReference type="InterPro" id="IPR010722">
    <property type="entry name" value="BATS_dom"/>
</dbReference>
<dbReference type="InterPro" id="IPR002684">
    <property type="entry name" value="Biotin_synth/BioAB"/>
</dbReference>
<dbReference type="InterPro" id="IPR024177">
    <property type="entry name" value="Biotin_synthase"/>
</dbReference>
<dbReference type="InterPro" id="IPR006638">
    <property type="entry name" value="Elp3/MiaA/NifB-like_rSAM"/>
</dbReference>
<dbReference type="InterPro" id="IPR007197">
    <property type="entry name" value="rSAM"/>
</dbReference>
<dbReference type="NCBIfam" id="TIGR00433">
    <property type="entry name" value="bioB"/>
    <property type="match status" value="1"/>
</dbReference>
<dbReference type="PANTHER" id="PTHR22976">
    <property type="entry name" value="BIOTIN SYNTHASE"/>
    <property type="match status" value="1"/>
</dbReference>
<dbReference type="PANTHER" id="PTHR22976:SF2">
    <property type="entry name" value="BIOTIN SYNTHASE, MITOCHONDRIAL"/>
    <property type="match status" value="1"/>
</dbReference>
<dbReference type="Pfam" id="PF06968">
    <property type="entry name" value="BATS"/>
    <property type="match status" value="1"/>
</dbReference>
<dbReference type="Pfam" id="PF04055">
    <property type="entry name" value="Radical_SAM"/>
    <property type="match status" value="1"/>
</dbReference>
<dbReference type="PIRSF" id="PIRSF001619">
    <property type="entry name" value="Biotin_synth"/>
    <property type="match status" value="1"/>
</dbReference>
<dbReference type="SFLD" id="SFLDG01060">
    <property type="entry name" value="BATS_domain_containing"/>
    <property type="match status" value="1"/>
</dbReference>
<dbReference type="SFLD" id="SFLDF00272">
    <property type="entry name" value="biotin_synthase"/>
    <property type="match status" value="1"/>
</dbReference>
<dbReference type="SMART" id="SM00876">
    <property type="entry name" value="BATS"/>
    <property type="match status" value="1"/>
</dbReference>
<dbReference type="SMART" id="SM00729">
    <property type="entry name" value="Elp3"/>
    <property type="match status" value="1"/>
</dbReference>
<dbReference type="SUPFAM" id="SSF102114">
    <property type="entry name" value="Radical SAM enzymes"/>
    <property type="match status" value="1"/>
</dbReference>
<dbReference type="PROSITE" id="PS51918">
    <property type="entry name" value="RADICAL_SAM"/>
    <property type="match status" value="1"/>
</dbReference>
<proteinExistence type="inferred from homology"/>